<organismHost>
    <name type="scientific">Synechococcus</name>
    <dbReference type="NCBI Taxonomy" id="1129"/>
</organismHost>
<name>PSBD_BPSYS</name>
<comment type="function">
    <text evidence="1">Photosystem II (PSII) is a light-driven water:plastoquinone oxidoreductase that uses light energy to abstract electrons from H(2)O, generating O(2) and a proton gradient subsequently used for ATP formation. It consists of a core antenna complex that captures photons, and an electron transfer chain that converts photonic excitation into a charge separation. The D1/D2 (PsbA/PsbD) reaction center heterodimer binds P680, the primary electron donor of PSII as well as several subsequent electron acceptors. D2 is needed for assembly of a stable PSII complex.</text>
</comment>
<comment type="catalytic activity">
    <reaction evidence="1">
        <text>2 a plastoquinone + 4 hnu + 2 H2O = 2 a plastoquinol + O2</text>
        <dbReference type="Rhea" id="RHEA:36359"/>
        <dbReference type="Rhea" id="RHEA-COMP:9561"/>
        <dbReference type="Rhea" id="RHEA-COMP:9562"/>
        <dbReference type="ChEBI" id="CHEBI:15377"/>
        <dbReference type="ChEBI" id="CHEBI:15379"/>
        <dbReference type="ChEBI" id="CHEBI:17757"/>
        <dbReference type="ChEBI" id="CHEBI:30212"/>
        <dbReference type="ChEBI" id="CHEBI:62192"/>
        <dbReference type="EC" id="1.10.3.9"/>
    </reaction>
</comment>
<comment type="cofactor">
    <text evidence="1">The D1/D2 heterodimer binds P680, chlorophylls that are the primary electron donor of PSII, and subsequent electron acceptors. It shares a non-heme iron and each subunit binds pheophytin, quinone, additional chlorophylls, carotenoids and lipids. There is also a Cl(-1) ion associated with D1 and D2, which is required for oxygen evolution. The PSII complex binds additional chlorophylls, carotenoids and specific lipids.</text>
</comment>
<comment type="subunit">
    <text evidence="1">PSII is composed of 1 copy each of membrane proteins PsbA, PsbB, PsbC, PsbD, PsbE, PsbF, PsbH, PsbI, PsbJ, PsbK, PsbL, PsbM, PsbT, PsbX, PsbY, PsbZ, Psb30/Ycf12, peripheral proteins PsbO, CyanoQ (PsbQ), PsbU, PsbV and a large number of cofactors. It forms dimeric complexes.</text>
</comment>
<comment type="subcellular location">
    <subcellularLocation>
        <location evidence="2">Host cellular thylakoid membrane</location>
        <topology evidence="2">Multi-pass membrane protein</topology>
    </subcellularLocation>
</comment>
<comment type="similarity">
    <text evidence="1">Belongs to the reaction center PufL/M/PsbA/D family.</text>
</comment>
<accession>Q0QZ08</accession>
<feature type="chain" id="PRO_0000359713" description="Photosystem II D2 protein">
    <location>
        <begin position="1"/>
        <end position="351"/>
    </location>
</feature>
<feature type="transmembrane region" description="Helical" evidence="1">
    <location>
        <begin position="39"/>
        <end position="59"/>
    </location>
</feature>
<feature type="transmembrane region" description="Helical" evidence="1">
    <location>
        <begin position="123"/>
        <end position="139"/>
    </location>
</feature>
<feature type="transmembrane region" description="Helical" evidence="1">
    <location>
        <begin position="151"/>
        <end position="164"/>
    </location>
</feature>
<feature type="transmembrane region" description="Helical" evidence="1">
    <location>
        <begin position="206"/>
        <end position="226"/>
    </location>
</feature>
<feature type="transmembrane region" description="Helical" evidence="1">
    <location>
        <begin position="277"/>
        <end position="293"/>
    </location>
</feature>
<feature type="binding site" description="axial binding residue" evidence="1">
    <location>
        <position position="116"/>
    </location>
    <ligand>
        <name>chlorophyll a</name>
        <dbReference type="ChEBI" id="CHEBI:58416"/>
        <label>ChlzD2</label>
    </ligand>
    <ligandPart>
        <name>Mg</name>
        <dbReference type="ChEBI" id="CHEBI:25107"/>
    </ligandPart>
</feature>
<feature type="binding site" evidence="1">
    <location>
        <position position="128"/>
    </location>
    <ligand>
        <name>pheophytin a</name>
        <dbReference type="ChEBI" id="CHEBI:136840"/>
        <label>D2</label>
    </ligand>
</feature>
<feature type="binding site" evidence="1">
    <location>
        <position position="141"/>
    </location>
    <ligand>
        <name>pheophytin a</name>
        <dbReference type="ChEBI" id="CHEBI:136840"/>
        <label>D2</label>
    </ligand>
</feature>
<feature type="binding site" description="axial binding residue" evidence="1">
    <location>
        <position position="196"/>
    </location>
    <ligand>
        <name>chlorophyll a</name>
        <dbReference type="ChEBI" id="CHEBI:58416"/>
        <label>PD2</label>
    </ligand>
    <ligandPart>
        <name>Mg</name>
        <dbReference type="ChEBI" id="CHEBI:25107"/>
    </ligandPart>
</feature>
<feature type="binding site" evidence="1">
    <location>
        <position position="213"/>
    </location>
    <ligand>
        <name>a plastoquinone</name>
        <dbReference type="ChEBI" id="CHEBI:17757"/>
        <label>Q(A)</label>
    </ligand>
</feature>
<feature type="binding site" evidence="1">
    <location>
        <position position="213"/>
    </location>
    <ligand>
        <name>Fe cation</name>
        <dbReference type="ChEBI" id="CHEBI:24875"/>
        <note>ligand shared with heterodimeric partner</note>
    </ligand>
</feature>
<feature type="binding site" evidence="1">
    <location>
        <position position="260"/>
    </location>
    <ligand>
        <name>a plastoquinone</name>
        <dbReference type="ChEBI" id="CHEBI:17757"/>
        <label>Q(A)</label>
    </ligand>
</feature>
<feature type="binding site" evidence="1">
    <location>
        <position position="267"/>
    </location>
    <ligand>
        <name>Fe cation</name>
        <dbReference type="ChEBI" id="CHEBI:24875"/>
        <note>ligand shared with heterodimeric partner</note>
    </ligand>
</feature>
<sequence length="351" mass="39318">MTTSTLQAPTRGWFDVLDDWLKRDRFVFVGWSGLLLFPTAYLAIGGWLTGTTFVTSWYTHGLASSYLEGANFLTAAVSTPADAMGHSLLLLWGPESQGDFIRWCQLGGLWAFVALHGAFALIGFMLRQFEISRLVGIRPYNAIAFSGPIAVFVSVFLIYPLGQSSWFFAPSFGVAAIFRFLLFLQGFHNWTLNPFHMMGVAGILGGALLSAIHGVTVENTLYEDGEQANTFKAFDTTQEEETYSMVTANRFWSQIFGIAFSNKRWLHFFMLFVPVMGLWTSSIGIIGLALNLRAYDFVSQEVRAAEDPEFETFYTKNILLNEGLRAWMAPVDQPHENFVFPEEVLPRGNAL</sequence>
<proteinExistence type="inferred from homology"/>
<evidence type="ECO:0000250" key="1">
    <source>
        <dbReference type="UniProtKB" id="D0VWR8"/>
    </source>
</evidence>
<evidence type="ECO:0000305" key="2"/>
<reference key="1">
    <citation type="journal article" date="2007" name="Environ. Microbiol.">
        <title>Genomic and structural analysis of Syn9, a cyanophage infecting marine Prochlorococcus and Synechococcus.</title>
        <authorList>
            <person name="Weigele P.R."/>
            <person name="Pope W.H."/>
            <person name="Pedulla M.L."/>
            <person name="Houtz J.M."/>
            <person name="Smith A.L."/>
            <person name="Conway J.F."/>
            <person name="King J."/>
            <person name="Hatfull G.F."/>
            <person name="Lawrence J.G."/>
            <person name="Hendrix R.W."/>
        </authorList>
    </citation>
    <scope>NUCLEOTIDE SEQUENCE [LARGE SCALE GENOMIC DNA]</scope>
</reference>
<keyword id="KW-0148">Chlorophyll</keyword>
<keyword id="KW-0157">Chromophore</keyword>
<keyword id="KW-0249">Electron transport</keyword>
<keyword id="KW-1043">Host membrane</keyword>
<keyword id="KW-1050">Host thylakoid</keyword>
<keyword id="KW-0408">Iron</keyword>
<keyword id="KW-0460">Magnesium</keyword>
<keyword id="KW-0472">Membrane</keyword>
<keyword id="KW-0479">Metal-binding</keyword>
<keyword id="KW-0560">Oxidoreductase</keyword>
<keyword id="KW-0602">Photosynthesis</keyword>
<keyword id="KW-0604">Photosystem II</keyword>
<keyword id="KW-1185">Reference proteome</keyword>
<keyword id="KW-0812">Transmembrane</keyword>
<keyword id="KW-1133">Transmembrane helix</keyword>
<keyword id="KW-0813">Transport</keyword>
<protein>
    <recommendedName>
        <fullName>Photosystem II D2 protein</fullName>
        <shortName>PSII D2 protein</shortName>
        <ecNumber>1.10.3.9</ecNumber>
    </recommendedName>
    <alternativeName>
        <fullName>Photosystem Q(A) protein</fullName>
    </alternativeName>
</protein>
<dbReference type="EC" id="1.10.3.9"/>
<dbReference type="EMBL" id="DQ149023">
    <property type="protein sequence ID" value="ABA47187.1"/>
    <property type="molecule type" value="Genomic_DNA"/>
</dbReference>
<dbReference type="RefSeq" id="YP_717887.1">
    <property type="nucleotide sequence ID" value="NC_008296.2"/>
</dbReference>
<dbReference type="SMR" id="Q0QZ08"/>
<dbReference type="KEGG" id="vg:4238985"/>
<dbReference type="OrthoDB" id="3306at10239"/>
<dbReference type="Proteomes" id="UP000000909">
    <property type="component" value="Genome"/>
</dbReference>
<dbReference type="GO" id="GO:0044160">
    <property type="term" value="C:host thylakoid membrane"/>
    <property type="evidence" value="ECO:0007669"/>
    <property type="project" value="UniProtKB-SubCell"/>
</dbReference>
<dbReference type="GO" id="GO:0016020">
    <property type="term" value="C:membrane"/>
    <property type="evidence" value="ECO:0007669"/>
    <property type="project" value="UniProtKB-KW"/>
</dbReference>
<dbReference type="GO" id="GO:0016168">
    <property type="term" value="F:chlorophyll binding"/>
    <property type="evidence" value="ECO:0007669"/>
    <property type="project" value="UniProtKB-KW"/>
</dbReference>
<dbReference type="GO" id="GO:0045156">
    <property type="term" value="F:electron transporter, transferring electrons within the cyclic electron transport pathway of photosynthesis activity"/>
    <property type="evidence" value="ECO:0007669"/>
    <property type="project" value="InterPro"/>
</dbReference>
<dbReference type="GO" id="GO:0046872">
    <property type="term" value="F:metal ion binding"/>
    <property type="evidence" value="ECO:0007669"/>
    <property type="project" value="UniProtKB-KW"/>
</dbReference>
<dbReference type="GO" id="GO:0016491">
    <property type="term" value="F:oxidoreductase activity"/>
    <property type="evidence" value="ECO:0007669"/>
    <property type="project" value="UniProtKB-KW"/>
</dbReference>
<dbReference type="GO" id="GO:0009772">
    <property type="term" value="P:photosynthetic electron transport in photosystem II"/>
    <property type="evidence" value="ECO:0007669"/>
    <property type="project" value="InterPro"/>
</dbReference>
<dbReference type="FunFam" id="1.20.85.10:FF:000001">
    <property type="entry name" value="photosystem II D2 protein-like"/>
    <property type="match status" value="1"/>
</dbReference>
<dbReference type="Gene3D" id="1.20.85.10">
    <property type="entry name" value="Photosystem II protein D1-like"/>
    <property type="match status" value="1"/>
</dbReference>
<dbReference type="HAMAP" id="MF_01383">
    <property type="entry name" value="PSII_PsbD_D2"/>
    <property type="match status" value="1"/>
</dbReference>
<dbReference type="InterPro" id="IPR055266">
    <property type="entry name" value="D1/D2"/>
</dbReference>
<dbReference type="InterPro" id="IPR036854">
    <property type="entry name" value="Photo_II_D1/D2_sf"/>
</dbReference>
<dbReference type="InterPro" id="IPR000484">
    <property type="entry name" value="Photo_RC_L/M"/>
</dbReference>
<dbReference type="InterPro" id="IPR005868">
    <property type="entry name" value="PSII_PsbD/D2"/>
</dbReference>
<dbReference type="NCBIfam" id="TIGR01152">
    <property type="entry name" value="psbD"/>
    <property type="match status" value="1"/>
</dbReference>
<dbReference type="PANTHER" id="PTHR33149:SF12">
    <property type="entry name" value="PHOTOSYSTEM II D2 PROTEIN"/>
    <property type="match status" value="1"/>
</dbReference>
<dbReference type="PANTHER" id="PTHR33149">
    <property type="entry name" value="PHOTOSYSTEM II PROTEIN D1"/>
    <property type="match status" value="1"/>
</dbReference>
<dbReference type="Pfam" id="PF00124">
    <property type="entry name" value="Photo_RC"/>
    <property type="match status" value="1"/>
</dbReference>
<dbReference type="PRINTS" id="PR00256">
    <property type="entry name" value="REACTNCENTRE"/>
</dbReference>
<dbReference type="SUPFAM" id="SSF81483">
    <property type="entry name" value="Bacterial photosystem II reaction centre, L and M subunits"/>
    <property type="match status" value="1"/>
</dbReference>
<gene>
    <name type="primary">psbD</name>
</gene>
<organism>
    <name type="scientific">Synechococcus phage syn9</name>
    <dbReference type="NCBI Taxonomy" id="382359"/>
    <lineage>
        <taxon>Viruses</taxon>
        <taxon>Duplodnaviria</taxon>
        <taxon>Heunggongvirae</taxon>
        <taxon>Uroviricota</taxon>
        <taxon>Caudoviricetes</taxon>
        <taxon>Kyanoviridae</taxon>
        <taxon>Ormenosvirus</taxon>
        <taxon>Ormenosvirus syn9</taxon>
    </lineage>
</organism>